<feature type="chain" id="PRO_1000098726" description="Glycerol kinase">
    <location>
        <begin position="1"/>
        <end position="498"/>
    </location>
</feature>
<feature type="binding site" evidence="1">
    <location>
        <position position="12"/>
    </location>
    <ligand>
        <name>ADP</name>
        <dbReference type="ChEBI" id="CHEBI:456216"/>
    </ligand>
</feature>
<feature type="binding site" evidence="1">
    <location>
        <position position="12"/>
    </location>
    <ligand>
        <name>ATP</name>
        <dbReference type="ChEBI" id="CHEBI:30616"/>
    </ligand>
</feature>
<feature type="binding site" evidence="1">
    <location>
        <position position="12"/>
    </location>
    <ligand>
        <name>sn-glycerol 3-phosphate</name>
        <dbReference type="ChEBI" id="CHEBI:57597"/>
    </ligand>
</feature>
<feature type="binding site" evidence="1">
    <location>
        <position position="13"/>
    </location>
    <ligand>
        <name>ATP</name>
        <dbReference type="ChEBI" id="CHEBI:30616"/>
    </ligand>
</feature>
<feature type="binding site" evidence="1">
    <location>
        <position position="14"/>
    </location>
    <ligand>
        <name>ATP</name>
        <dbReference type="ChEBI" id="CHEBI:30616"/>
    </ligand>
</feature>
<feature type="binding site" evidence="1">
    <location>
        <position position="16"/>
    </location>
    <ligand>
        <name>ADP</name>
        <dbReference type="ChEBI" id="CHEBI:456216"/>
    </ligand>
</feature>
<feature type="binding site" evidence="1">
    <location>
        <position position="82"/>
    </location>
    <ligand>
        <name>glycerol</name>
        <dbReference type="ChEBI" id="CHEBI:17754"/>
    </ligand>
</feature>
<feature type="binding site" evidence="1">
    <location>
        <position position="82"/>
    </location>
    <ligand>
        <name>sn-glycerol 3-phosphate</name>
        <dbReference type="ChEBI" id="CHEBI:57597"/>
    </ligand>
</feature>
<feature type="binding site" evidence="1">
    <location>
        <position position="83"/>
    </location>
    <ligand>
        <name>glycerol</name>
        <dbReference type="ChEBI" id="CHEBI:17754"/>
    </ligand>
</feature>
<feature type="binding site" evidence="1">
    <location>
        <position position="83"/>
    </location>
    <ligand>
        <name>sn-glycerol 3-phosphate</name>
        <dbReference type="ChEBI" id="CHEBI:57597"/>
    </ligand>
</feature>
<feature type="binding site" evidence="1">
    <location>
        <position position="134"/>
    </location>
    <ligand>
        <name>glycerol</name>
        <dbReference type="ChEBI" id="CHEBI:17754"/>
    </ligand>
</feature>
<feature type="binding site" evidence="1">
    <location>
        <position position="134"/>
    </location>
    <ligand>
        <name>sn-glycerol 3-phosphate</name>
        <dbReference type="ChEBI" id="CHEBI:57597"/>
    </ligand>
</feature>
<feature type="binding site" evidence="1">
    <location>
        <position position="243"/>
    </location>
    <ligand>
        <name>glycerol</name>
        <dbReference type="ChEBI" id="CHEBI:17754"/>
    </ligand>
</feature>
<feature type="binding site" evidence="1">
    <location>
        <position position="243"/>
    </location>
    <ligand>
        <name>sn-glycerol 3-phosphate</name>
        <dbReference type="ChEBI" id="CHEBI:57597"/>
    </ligand>
</feature>
<feature type="binding site" evidence="1">
    <location>
        <position position="244"/>
    </location>
    <ligand>
        <name>glycerol</name>
        <dbReference type="ChEBI" id="CHEBI:17754"/>
    </ligand>
</feature>
<feature type="binding site" evidence="1">
    <location>
        <position position="265"/>
    </location>
    <ligand>
        <name>ADP</name>
        <dbReference type="ChEBI" id="CHEBI:456216"/>
    </ligand>
</feature>
<feature type="binding site" evidence="1">
    <location>
        <position position="265"/>
    </location>
    <ligand>
        <name>ATP</name>
        <dbReference type="ChEBI" id="CHEBI:30616"/>
    </ligand>
</feature>
<feature type="binding site" evidence="1">
    <location>
        <position position="308"/>
    </location>
    <ligand>
        <name>ADP</name>
        <dbReference type="ChEBI" id="CHEBI:456216"/>
    </ligand>
</feature>
<feature type="binding site" evidence="1">
    <location>
        <position position="308"/>
    </location>
    <ligand>
        <name>ATP</name>
        <dbReference type="ChEBI" id="CHEBI:30616"/>
    </ligand>
</feature>
<feature type="binding site" evidence="1">
    <location>
        <position position="312"/>
    </location>
    <ligand>
        <name>ATP</name>
        <dbReference type="ChEBI" id="CHEBI:30616"/>
    </ligand>
</feature>
<feature type="binding site" evidence="1">
    <location>
        <position position="409"/>
    </location>
    <ligand>
        <name>ADP</name>
        <dbReference type="ChEBI" id="CHEBI:456216"/>
    </ligand>
</feature>
<feature type="binding site" evidence="1">
    <location>
        <position position="409"/>
    </location>
    <ligand>
        <name>ATP</name>
        <dbReference type="ChEBI" id="CHEBI:30616"/>
    </ligand>
</feature>
<feature type="binding site" evidence="1">
    <location>
        <position position="413"/>
    </location>
    <ligand>
        <name>ADP</name>
        <dbReference type="ChEBI" id="CHEBI:456216"/>
    </ligand>
</feature>
<evidence type="ECO:0000255" key="1">
    <source>
        <dbReference type="HAMAP-Rule" id="MF_00186"/>
    </source>
</evidence>
<keyword id="KW-0067">ATP-binding</keyword>
<keyword id="KW-0319">Glycerol metabolism</keyword>
<keyword id="KW-0418">Kinase</keyword>
<keyword id="KW-0547">Nucleotide-binding</keyword>
<keyword id="KW-0808">Transferase</keyword>
<comment type="function">
    <text evidence="1">Key enzyme in the regulation of glycerol uptake and metabolism. Catalyzes the phosphorylation of glycerol to yield sn-glycerol 3-phosphate.</text>
</comment>
<comment type="catalytic activity">
    <reaction evidence="1">
        <text>glycerol + ATP = sn-glycerol 3-phosphate + ADP + H(+)</text>
        <dbReference type="Rhea" id="RHEA:21644"/>
        <dbReference type="ChEBI" id="CHEBI:15378"/>
        <dbReference type="ChEBI" id="CHEBI:17754"/>
        <dbReference type="ChEBI" id="CHEBI:30616"/>
        <dbReference type="ChEBI" id="CHEBI:57597"/>
        <dbReference type="ChEBI" id="CHEBI:456216"/>
        <dbReference type="EC" id="2.7.1.30"/>
    </reaction>
</comment>
<comment type="activity regulation">
    <text evidence="1">Activated by phosphorylation and inhibited by fructose 1,6-bisphosphate (FBP).</text>
</comment>
<comment type="pathway">
    <text evidence="1">Polyol metabolism; glycerol degradation via glycerol kinase pathway; sn-glycerol 3-phosphate from glycerol: step 1/1.</text>
</comment>
<comment type="subunit">
    <text evidence="1">Homotetramer and homodimer (in equilibrium).</text>
</comment>
<comment type="similarity">
    <text evidence="1">Belongs to the FGGY kinase family.</text>
</comment>
<protein>
    <recommendedName>
        <fullName evidence="1">Glycerol kinase</fullName>
        <ecNumber evidence="1">2.7.1.30</ecNumber>
    </recommendedName>
    <alternativeName>
        <fullName evidence="1">ATP:glycerol 3-phosphotransferase</fullName>
    </alternativeName>
    <alternativeName>
        <fullName evidence="1">Glycerokinase</fullName>
        <shortName evidence="1">GK</shortName>
    </alternativeName>
</protein>
<organism>
    <name type="scientific">Clostridium botulinum (strain Okra / Type B1)</name>
    <dbReference type="NCBI Taxonomy" id="498213"/>
    <lineage>
        <taxon>Bacteria</taxon>
        <taxon>Bacillati</taxon>
        <taxon>Bacillota</taxon>
        <taxon>Clostridia</taxon>
        <taxon>Eubacteriales</taxon>
        <taxon>Clostridiaceae</taxon>
        <taxon>Clostridium</taxon>
    </lineage>
</organism>
<dbReference type="EC" id="2.7.1.30" evidence="1"/>
<dbReference type="EMBL" id="CP000939">
    <property type="protein sequence ID" value="ACA45249.1"/>
    <property type="molecule type" value="Genomic_DNA"/>
</dbReference>
<dbReference type="RefSeq" id="WP_003401646.1">
    <property type="nucleotide sequence ID" value="NC_010516.1"/>
</dbReference>
<dbReference type="SMR" id="B1IKJ7"/>
<dbReference type="KEGG" id="cbb:CLD_1789"/>
<dbReference type="HOGENOM" id="CLU_009281_2_3_9"/>
<dbReference type="UniPathway" id="UPA00618">
    <property type="reaction ID" value="UER00672"/>
</dbReference>
<dbReference type="Proteomes" id="UP000008541">
    <property type="component" value="Chromosome"/>
</dbReference>
<dbReference type="GO" id="GO:0005829">
    <property type="term" value="C:cytosol"/>
    <property type="evidence" value="ECO:0007669"/>
    <property type="project" value="TreeGrafter"/>
</dbReference>
<dbReference type="GO" id="GO:0005524">
    <property type="term" value="F:ATP binding"/>
    <property type="evidence" value="ECO:0007669"/>
    <property type="project" value="UniProtKB-UniRule"/>
</dbReference>
<dbReference type="GO" id="GO:0004370">
    <property type="term" value="F:glycerol kinase activity"/>
    <property type="evidence" value="ECO:0000250"/>
    <property type="project" value="UniProtKB"/>
</dbReference>
<dbReference type="GO" id="GO:0019563">
    <property type="term" value="P:glycerol catabolic process"/>
    <property type="evidence" value="ECO:0007669"/>
    <property type="project" value="UniProtKB-UniRule"/>
</dbReference>
<dbReference type="GO" id="GO:0006071">
    <property type="term" value="P:glycerol metabolic process"/>
    <property type="evidence" value="ECO:0000250"/>
    <property type="project" value="UniProtKB"/>
</dbReference>
<dbReference type="GO" id="GO:0006072">
    <property type="term" value="P:glycerol-3-phosphate metabolic process"/>
    <property type="evidence" value="ECO:0007669"/>
    <property type="project" value="InterPro"/>
</dbReference>
<dbReference type="CDD" id="cd07786">
    <property type="entry name" value="FGGY_EcGK_like"/>
    <property type="match status" value="1"/>
</dbReference>
<dbReference type="FunFam" id="3.30.420.40:FF:000007">
    <property type="entry name" value="Glycerol kinase"/>
    <property type="match status" value="1"/>
</dbReference>
<dbReference type="FunFam" id="3.30.420.40:FF:000008">
    <property type="entry name" value="Glycerol kinase"/>
    <property type="match status" value="1"/>
</dbReference>
<dbReference type="Gene3D" id="3.30.420.40">
    <property type="match status" value="2"/>
</dbReference>
<dbReference type="HAMAP" id="MF_00186">
    <property type="entry name" value="Glycerol_kin"/>
    <property type="match status" value="1"/>
</dbReference>
<dbReference type="InterPro" id="IPR043129">
    <property type="entry name" value="ATPase_NBD"/>
</dbReference>
<dbReference type="InterPro" id="IPR000577">
    <property type="entry name" value="Carb_kinase_FGGY"/>
</dbReference>
<dbReference type="InterPro" id="IPR018483">
    <property type="entry name" value="Carb_kinase_FGGY_CS"/>
</dbReference>
<dbReference type="InterPro" id="IPR018485">
    <property type="entry name" value="FGGY_C"/>
</dbReference>
<dbReference type="InterPro" id="IPR018484">
    <property type="entry name" value="FGGY_N"/>
</dbReference>
<dbReference type="InterPro" id="IPR005999">
    <property type="entry name" value="Glycerol_kin"/>
</dbReference>
<dbReference type="NCBIfam" id="TIGR01311">
    <property type="entry name" value="glycerol_kin"/>
    <property type="match status" value="1"/>
</dbReference>
<dbReference type="NCBIfam" id="NF000756">
    <property type="entry name" value="PRK00047.1"/>
    <property type="match status" value="1"/>
</dbReference>
<dbReference type="PANTHER" id="PTHR10196:SF69">
    <property type="entry name" value="GLYCEROL KINASE"/>
    <property type="match status" value="1"/>
</dbReference>
<dbReference type="PANTHER" id="PTHR10196">
    <property type="entry name" value="SUGAR KINASE"/>
    <property type="match status" value="1"/>
</dbReference>
<dbReference type="Pfam" id="PF02782">
    <property type="entry name" value="FGGY_C"/>
    <property type="match status" value="1"/>
</dbReference>
<dbReference type="Pfam" id="PF00370">
    <property type="entry name" value="FGGY_N"/>
    <property type="match status" value="1"/>
</dbReference>
<dbReference type="PIRSF" id="PIRSF000538">
    <property type="entry name" value="GlpK"/>
    <property type="match status" value="1"/>
</dbReference>
<dbReference type="SUPFAM" id="SSF53067">
    <property type="entry name" value="Actin-like ATPase domain"/>
    <property type="match status" value="2"/>
</dbReference>
<dbReference type="PROSITE" id="PS00933">
    <property type="entry name" value="FGGY_KINASES_1"/>
    <property type="match status" value="1"/>
</dbReference>
<dbReference type="PROSITE" id="PS00445">
    <property type="entry name" value="FGGY_KINASES_2"/>
    <property type="match status" value="1"/>
</dbReference>
<proteinExistence type="inferred from homology"/>
<reference key="1">
    <citation type="journal article" date="2007" name="PLoS ONE">
        <title>Analysis of the neurotoxin complex genes in Clostridium botulinum A1-A4 and B1 strains: BoNT/A3, /Ba4 and /B1 clusters are located within plasmids.</title>
        <authorList>
            <person name="Smith T.J."/>
            <person name="Hill K.K."/>
            <person name="Foley B.T."/>
            <person name="Detter J.C."/>
            <person name="Munk A.C."/>
            <person name="Bruce D.C."/>
            <person name="Doggett N.A."/>
            <person name="Smith L.A."/>
            <person name="Marks J.D."/>
            <person name="Xie G."/>
            <person name="Brettin T.S."/>
        </authorList>
    </citation>
    <scope>NUCLEOTIDE SEQUENCE [LARGE SCALE GENOMIC DNA]</scope>
    <source>
        <strain>Okra / Type B1</strain>
    </source>
</reference>
<accession>B1IKJ7</accession>
<name>GLPK_CLOBK</name>
<gene>
    <name evidence="1" type="primary">glpK</name>
    <name type="ordered locus">CLD_1789</name>
</gene>
<sequence length="498" mass="55393">MEKYIMSLDQGTTSSRCIIFNKKGEVVSVAQKEFTQIYPKAGWVEHDPLEIWGKQAGVAGEALNIARISPEQIAGIGITNQRETTVVWNKRTGMPVYNAIVWQCRRTAGYCDELREKGLDKTIKEKTGLMLDAYFSATKIKWILDNVEGARELAEKGDLLFGNIDTWLIWNMTKGKIHVTDYTNASRTMLFNIHELKWDEELLEILDIPKSMLPEVKPSSCVYGETDEILFGVSIPISGDAGDQQAALFGQTCFNAGMAKNTYGTGCFLLMNTGEKAVDSKNGLLTTIAVGIDGKVEYALEGSIFIGGAVIQWLRDELRMVKTAQETEKYATEVEDNNGVYLVPAFVGIGAPYWDSYARGTILGLTRGAKKEHIIRAALESMAYQTHDVLKAMEEDSGIELKALKVDGGACQNNFLMQFQSDILGVEVDRPEVVETTALGAAYLAGLAVGYWKDRNEISQNWAISRSFAPAMEDEKKEKLIKGWHKAVTKAMDWEERE</sequence>